<dbReference type="EC" id="3.1.12.1" evidence="2 3"/>
<dbReference type="EMBL" id="AE006641">
    <property type="protein sequence ID" value="AAK43340.1"/>
    <property type="molecule type" value="Genomic_DNA"/>
</dbReference>
<dbReference type="PIR" id="A90139">
    <property type="entry name" value="A90139"/>
</dbReference>
<dbReference type="RefSeq" id="WP_009989652.1">
    <property type="nucleotide sequence ID" value="NC_002754.1"/>
</dbReference>
<dbReference type="PDB" id="4IC1">
    <property type="method" value="X-ray"/>
    <property type="resolution" value="2.35 A"/>
    <property type="chains" value="A/B/C/D/F/G/H/I/J/K=1-202"/>
</dbReference>
<dbReference type="PDBsum" id="4IC1"/>
<dbReference type="SMR" id="Q97TX9"/>
<dbReference type="STRING" id="273057.SSO0001"/>
<dbReference type="PaxDb" id="273057-SSO0001"/>
<dbReference type="EnsemblBacteria" id="AAK43340">
    <property type="protein sequence ID" value="AAK43340"/>
    <property type="gene ID" value="SSO0001"/>
</dbReference>
<dbReference type="GeneID" id="44128964"/>
<dbReference type="KEGG" id="sso:SSO0001"/>
<dbReference type="PATRIC" id="fig|273057.12.peg.2"/>
<dbReference type="eggNOG" id="arCOG00790">
    <property type="taxonomic scope" value="Archaea"/>
</dbReference>
<dbReference type="HOGENOM" id="CLU_106570_0_0_2"/>
<dbReference type="InParanoid" id="Q97TX9"/>
<dbReference type="PhylomeDB" id="Q97TX9"/>
<dbReference type="BRENDA" id="3.1.12.1">
    <property type="organism ID" value="6163"/>
</dbReference>
<dbReference type="EvolutionaryTrace" id="Q97TX9"/>
<dbReference type="Proteomes" id="UP000001974">
    <property type="component" value="Chromosome"/>
</dbReference>
<dbReference type="GO" id="GO:0051539">
    <property type="term" value="F:4 iron, 4 sulfur cluster binding"/>
    <property type="evidence" value="ECO:0000314"/>
    <property type="project" value="UniProtKB"/>
</dbReference>
<dbReference type="GO" id="GO:0003677">
    <property type="term" value="F:DNA binding"/>
    <property type="evidence" value="ECO:0007669"/>
    <property type="project" value="UniProtKB-KW"/>
</dbReference>
<dbReference type="GO" id="GO:0030145">
    <property type="term" value="F:manganese ion binding"/>
    <property type="evidence" value="ECO:0000314"/>
    <property type="project" value="UniProtKB"/>
</dbReference>
<dbReference type="GO" id="GO:0045145">
    <property type="term" value="F:single-stranded DNA 5'-3' DNA exonuclease activity"/>
    <property type="evidence" value="ECO:0000314"/>
    <property type="project" value="UniProtKB"/>
</dbReference>
<dbReference type="GO" id="GO:0051607">
    <property type="term" value="P:defense response to virus"/>
    <property type="evidence" value="ECO:0007669"/>
    <property type="project" value="UniProtKB-KW"/>
</dbReference>
<dbReference type="GO" id="GO:0006308">
    <property type="term" value="P:DNA catabolic process"/>
    <property type="evidence" value="ECO:0000314"/>
    <property type="project" value="UniProtKB"/>
</dbReference>
<dbReference type="Gene3D" id="3.90.320.10">
    <property type="match status" value="1"/>
</dbReference>
<dbReference type="InterPro" id="IPR051827">
    <property type="entry name" value="Cas4_exonuclease"/>
</dbReference>
<dbReference type="InterPro" id="IPR013343">
    <property type="entry name" value="CRISPR-assoc_prot_Cas4"/>
</dbReference>
<dbReference type="InterPro" id="IPR011604">
    <property type="entry name" value="PDDEXK-like_dom_sf"/>
</dbReference>
<dbReference type="InterPro" id="IPR038726">
    <property type="entry name" value="PDDEXK_AddAB-type"/>
</dbReference>
<dbReference type="NCBIfam" id="TIGR00372">
    <property type="entry name" value="cas4"/>
    <property type="match status" value="1"/>
</dbReference>
<dbReference type="PANTHER" id="PTHR36531">
    <property type="entry name" value="CRISPR-ASSOCIATED EXONUCLEASE CAS4"/>
    <property type="match status" value="1"/>
</dbReference>
<dbReference type="PANTHER" id="PTHR36531:SF2">
    <property type="entry name" value="CRISPR-ASSOCIATED EXONUCLEASE CAS4"/>
    <property type="match status" value="1"/>
</dbReference>
<dbReference type="Pfam" id="PF12705">
    <property type="entry name" value="PDDEXK_1"/>
    <property type="match status" value="1"/>
</dbReference>
<comment type="function">
    <text evidence="1 2 3">CRISPR (clustered regularly interspaced short palindromic repeat) is an adaptive immune system that provides protection against mobile genetic elements (viruses, transposable elements and conjugative plasmids). CRISPR clusters contain sequences complementary to antecedent mobile elements and target invading nucleic acids. CRISPR clusters are transcribed and processed into CRISPR RNA (crRNA) (By similarity). This protein is a 5' to 3' partially processive exonuclease that cleaves off single mononucleotides. Has a marked preference for ssDNA, although in vitro it also acts on dsDNA and ssRNA. Has low endonuclease activity with circular ssDNA. Binds ssDNA and can unwind dsDNA; unwinding does not require ATP.</text>
</comment>
<comment type="catalytic activity">
    <reaction evidence="2 3">
        <text>exonucleolytic cleavage in the 5'- to 3'-direction to yield nucleoside 3'-phosphates.</text>
        <dbReference type="EC" id="3.1.12.1"/>
    </reaction>
</comment>
<comment type="cofactor">
    <cofactor evidence="2 3">
        <name>Mg(2+)</name>
        <dbReference type="ChEBI" id="CHEBI:18420"/>
    </cofactor>
    <cofactor evidence="2 3">
        <name>Mn(2+)</name>
        <dbReference type="ChEBI" id="CHEBI:29035"/>
    </cofactor>
    <cofactor evidence="2 3">
        <name>Cu(2+)</name>
        <dbReference type="ChEBI" id="CHEBI:29036"/>
    </cofactor>
    <text evidence="2 3">Mg(2+) or Mn(2+) required for ssDNA cleavage activity. Can also utilise Cu(2+).</text>
</comment>
<comment type="cofactor">
    <cofactor evidence="2 3 4">
        <name>[4Fe-4S] cluster</name>
        <dbReference type="ChEBI" id="CHEBI:49883"/>
    </cofactor>
    <text evidence="2 3 4">Binds 1 [4Fe-4S] cluster per subunit (PubMed:24171432). It may be important for protein stability, since mutation of the Cys that bind the cofactor leads to a colorless, insoluble protein.</text>
</comment>
<comment type="biophysicochemical properties">
    <phDependence>
        <text evidence="3">Optimum pH is 9-10.</text>
    </phDependence>
    <temperatureDependence>
        <text evidence="3">Optimum temperature is 65-70 degrees Celsius.</text>
    </temperatureDependence>
</comment>
<comment type="subunit">
    <text evidence="2 3">Homodecamer, formed by the assembly of dimers into a decameric toroid, with the active sites oriented towards the central tunnel.</text>
</comment>
<comment type="similarity">
    <text evidence="4">Belongs to the CRISPR-associated exonuclease Cas4 family.</text>
</comment>
<name>CAS4_SACS2</name>
<accession>Q97TX9</accession>
<protein>
    <recommendedName>
        <fullName>CRISPR-associated exonuclease Cas4</fullName>
        <ecNumber evidence="2 3">3.1.12.1</ecNumber>
    </recommendedName>
</protein>
<proteinExistence type="evidence at protein level"/>
<evidence type="ECO:0000250" key="1"/>
<evidence type="ECO:0000269" key="2">
    <source>
    </source>
</evidence>
<evidence type="ECO:0000269" key="3">
    <source>
    </source>
</evidence>
<evidence type="ECO:0000305" key="4"/>
<evidence type="ECO:0007829" key="5">
    <source>
        <dbReference type="PDB" id="4IC1"/>
    </source>
</evidence>
<sequence>MITEFLLKKKLEEHLSHVKEENTIYVTDLVRCPRRVRYESEYKELAISQVYAPSAILGDILHLGLESVLKGNFNAETEVETLREINVGGKVYKIKGRADAIIRNDNGKSIVIEIKTSRSDKGLPLIHHKMQLQIYLWLFSAEKGILVYITPDRIAEYEINEPLDEATIVRLAEDTIMLQNSPRFNWECKYCIFSVICPAKLT</sequence>
<feature type="chain" id="PRO_0000422224" description="CRISPR-associated exonuclease Cas4">
    <location>
        <begin position="1"/>
        <end position="202"/>
    </location>
</feature>
<feature type="binding site" evidence="3">
    <location>
        <position position="32"/>
    </location>
    <ligand>
        <name>[4Fe-4S] cluster</name>
        <dbReference type="ChEBI" id="CHEBI:49883"/>
    </ligand>
</feature>
<feature type="binding site" evidence="3">
    <location>
        <position position="62"/>
    </location>
    <ligand>
        <name>Mn(2+)</name>
        <dbReference type="ChEBI" id="CHEBI:29035"/>
    </ligand>
</feature>
<feature type="binding site" evidence="3">
    <location>
        <position position="99"/>
    </location>
    <ligand>
        <name>Mn(2+)</name>
        <dbReference type="ChEBI" id="CHEBI:29035"/>
    </ligand>
</feature>
<feature type="binding site" evidence="3">
    <location>
        <position position="113"/>
    </location>
    <ligand>
        <name>Mn(2+)</name>
        <dbReference type="ChEBI" id="CHEBI:29035"/>
    </ligand>
</feature>
<feature type="binding site" evidence="3">
    <location>
        <position position="114"/>
    </location>
    <ligand>
        <name>Mn(2+)</name>
        <dbReference type="ChEBI" id="CHEBI:29035"/>
    </ligand>
</feature>
<feature type="binding site" evidence="3">
    <location>
        <position position="188"/>
    </location>
    <ligand>
        <name>[4Fe-4S] cluster</name>
        <dbReference type="ChEBI" id="CHEBI:49883"/>
    </ligand>
</feature>
<feature type="binding site" evidence="3">
    <location>
        <position position="191"/>
    </location>
    <ligand>
        <name>[4Fe-4S] cluster</name>
        <dbReference type="ChEBI" id="CHEBI:49883"/>
    </ligand>
</feature>
<feature type="binding site" evidence="3">
    <location>
        <position position="197"/>
    </location>
    <ligand>
        <name>[4Fe-4S] cluster</name>
        <dbReference type="ChEBI" id="CHEBI:49883"/>
    </ligand>
</feature>
<feature type="mutagenesis site" description="Abolishes iron-sulfur (4Fe-4S) binding and exonuclease activity; when associated with A-188; A-191 and A-197." evidence="3">
    <original>C</original>
    <variation>A</variation>
    <location>
        <position position="32"/>
    </location>
</feature>
<feature type="mutagenesis site" description="Abolishes nuclease activity." evidence="2 3">
    <original>D</original>
    <variation>A</variation>
    <location>
        <position position="99"/>
    </location>
</feature>
<feature type="mutagenesis site" description="Impairs exonuclease activity." evidence="3">
    <original>E</original>
    <variation>A</variation>
    <location>
        <position position="113"/>
    </location>
</feature>
<feature type="mutagenesis site" description="Abolishes exonuclease activity." evidence="3">
    <original>K</original>
    <variation>A</variation>
    <location>
        <position position="115"/>
    </location>
</feature>
<feature type="mutagenesis site" description="Nearly abolishes exonuclease activity." evidence="3">
    <original>Y</original>
    <variation>A</variation>
    <location>
        <position position="148"/>
    </location>
</feature>
<feature type="mutagenesis site" description="Abolishes iron-sulfur (4Fe-4S) binding and exonuclease activity; when associated with A-32; A-191 and A-197." evidence="3">
    <original>C</original>
    <variation>A</variation>
    <location>
        <position position="188"/>
    </location>
</feature>
<feature type="mutagenesis site" description="Abolishes iron-sulfur (4Fe-4S) binding and exonuclease activity; when associated with A-32; A-188 and A-197." evidence="3">
    <original>C</original>
    <variation>A</variation>
    <location>
        <position position="191"/>
    </location>
</feature>
<feature type="mutagenesis site" description="Abolishes iron-sulfur (4Fe-4S) binding and exonuclease activity; when associated with A-32; A-188 and A-191." evidence="3">
    <original>C</original>
    <variation>A</variation>
    <location>
        <position position="197"/>
    </location>
</feature>
<feature type="helix" evidence="5">
    <location>
        <begin position="1"/>
        <end position="16"/>
    </location>
</feature>
<feature type="strand" evidence="5">
    <location>
        <begin position="23"/>
        <end position="25"/>
    </location>
</feature>
<feature type="helix" evidence="5">
    <location>
        <begin position="26"/>
        <end position="29"/>
    </location>
</feature>
<feature type="helix" evidence="5">
    <location>
        <begin position="33"/>
        <end position="41"/>
    </location>
</feature>
<feature type="helix" evidence="5">
    <location>
        <begin position="43"/>
        <end position="46"/>
    </location>
</feature>
<feature type="helix" evidence="5">
    <location>
        <begin position="47"/>
        <end position="51"/>
    </location>
</feature>
<feature type="helix" evidence="5">
    <location>
        <begin position="53"/>
        <end position="72"/>
    </location>
</feature>
<feature type="strand" evidence="5">
    <location>
        <begin position="75"/>
        <end position="87"/>
    </location>
</feature>
<feature type="strand" evidence="5">
    <location>
        <begin position="90"/>
        <end position="102"/>
    </location>
</feature>
<feature type="strand" evidence="5">
    <location>
        <begin position="105"/>
        <end position="107"/>
    </location>
</feature>
<feature type="strand" evidence="5">
    <location>
        <begin position="110"/>
        <end position="115"/>
    </location>
</feature>
<feature type="helix" evidence="5">
    <location>
        <begin position="126"/>
        <end position="139"/>
    </location>
</feature>
<feature type="strand" evidence="5">
    <location>
        <begin position="142"/>
        <end position="150"/>
    </location>
</feature>
<feature type="strand" evidence="5">
    <location>
        <begin position="153"/>
        <end position="159"/>
    </location>
</feature>
<feature type="helix" evidence="5">
    <location>
        <begin position="165"/>
        <end position="176"/>
    </location>
</feature>
<feature type="strand" evidence="5">
    <location>
        <begin position="180"/>
        <end position="184"/>
    </location>
</feature>
<feature type="helix" evidence="5">
    <location>
        <begin position="188"/>
        <end position="190"/>
    </location>
</feature>
<feature type="helix" evidence="5">
    <location>
        <begin position="194"/>
        <end position="196"/>
    </location>
</feature>
<reference key="1">
    <citation type="journal article" date="2001" name="Proc. Natl. Acad. Sci. U.S.A.">
        <title>The complete genome of the crenarchaeon Sulfolobus solfataricus P2.</title>
        <authorList>
            <person name="She Q."/>
            <person name="Singh R.K."/>
            <person name="Confalonieri F."/>
            <person name="Zivanovic Y."/>
            <person name="Allard G."/>
            <person name="Awayez M.J."/>
            <person name="Chan-Weiher C.C.-Y."/>
            <person name="Clausen I.G."/>
            <person name="Curtis B.A."/>
            <person name="De Moors A."/>
            <person name="Erauso G."/>
            <person name="Fletcher C."/>
            <person name="Gordon P.M.K."/>
            <person name="Heikamp-de Jong I."/>
            <person name="Jeffries A.C."/>
            <person name="Kozera C.J."/>
            <person name="Medina N."/>
            <person name="Peng X."/>
            <person name="Thi-Ngoc H.P."/>
            <person name="Redder P."/>
            <person name="Schenk M.E."/>
            <person name="Theriault C."/>
            <person name="Tolstrup N."/>
            <person name="Charlebois R.L."/>
            <person name="Doolittle W.F."/>
            <person name="Duguet M."/>
            <person name="Gaasterland T."/>
            <person name="Garrett R.A."/>
            <person name="Ragan M.A."/>
            <person name="Sensen C.W."/>
            <person name="Van der Oost J."/>
        </authorList>
    </citation>
    <scope>NUCLEOTIDE SEQUENCE [LARGE SCALE GENOMIC DNA]</scope>
    <source>
        <strain>ATCC 35092 / DSM 1617 / JCM 11322 / P2</strain>
    </source>
</reference>
<reference key="2">
    <citation type="journal article" date="2012" name="PLoS ONE">
        <title>The CRISPR associated protein Cas4 is a 5' to 3' DNA exonuclease with an iron-sulfur cluster.</title>
        <authorList>
            <person name="Zhang J."/>
            <person name="Kasciukovic T."/>
            <person name="White M.F."/>
        </authorList>
    </citation>
    <scope>FUNCTION AS AN EXONUCLEASE</scope>
    <scope>CATALYTIC ACTIVITY</scope>
    <scope>COFACTOR</scope>
    <scope>SUBUNIT</scope>
    <scope>MUTAGENESIS OF ASP-99</scope>
    <source>
        <strain>ATCC 35092 / DSM 1617 / JCM 11322 / P2</strain>
    </source>
</reference>
<reference key="3">
    <citation type="journal article" date="2013" name="J. Am. Chem. Soc.">
        <title>Toroidal structure and DNA cleavage by the CRISPR-associated [4Fe-4S] cluster containing Cas4 nuclease SSO0001 from Sulfolobus solfataricus.</title>
        <authorList>
            <person name="Lemak S."/>
            <person name="Beloglazova N."/>
            <person name="Nocek B."/>
            <person name="Skarina T."/>
            <person name="Flick R."/>
            <person name="Brown G."/>
            <person name="Popovic A."/>
            <person name="Joachimiak A."/>
            <person name="Savchenko A."/>
            <person name="Yakunin A.F."/>
        </authorList>
    </citation>
    <scope>X-RAY CRYSTALLOGRAPHY (2.35 ANGSTROMS) IN COMPLEX WITH IRON-SULFUR (4FE-4S) AND MANGANESE</scope>
    <scope>FUNCTION</scope>
    <scope>CATALYTIC ACTIVITY</scope>
    <scope>COFACTOR</scope>
    <scope>BIOPHYSICOCHEMICAL PROPERTIES</scope>
    <scope>DNA-BINDING</scope>
    <scope>SUBUNIT</scope>
    <scope>MUTAGENESIS OF CYS-32; ASP-99; LYS-115; TYR-148; CYS-188; CYS-191 AND CYS-197</scope>
</reference>
<gene>
    <name type="primary">cas4</name>
    <name type="ordered locus">SSO0001</name>
</gene>
<organism>
    <name type="scientific">Saccharolobus solfataricus (strain ATCC 35092 / DSM 1617 / JCM 11322 / P2)</name>
    <name type="common">Sulfolobus solfataricus</name>
    <dbReference type="NCBI Taxonomy" id="273057"/>
    <lineage>
        <taxon>Archaea</taxon>
        <taxon>Thermoproteota</taxon>
        <taxon>Thermoprotei</taxon>
        <taxon>Sulfolobales</taxon>
        <taxon>Sulfolobaceae</taxon>
        <taxon>Saccharolobus</taxon>
    </lineage>
</organism>
<keyword id="KW-0002">3D-structure</keyword>
<keyword id="KW-0004">4Fe-4S</keyword>
<keyword id="KW-0051">Antiviral defense</keyword>
<keyword id="KW-0238">DNA-binding</keyword>
<keyword id="KW-0269">Exonuclease</keyword>
<keyword id="KW-0378">Hydrolase</keyword>
<keyword id="KW-0408">Iron</keyword>
<keyword id="KW-0411">Iron-sulfur</keyword>
<keyword id="KW-0464">Manganese</keyword>
<keyword id="KW-0479">Metal-binding</keyword>
<keyword id="KW-0540">Nuclease</keyword>
<keyword id="KW-1185">Reference proteome</keyword>